<organism>
    <name type="scientific">Cyrtonyx montezumae</name>
    <name type="common">Montezuma quail</name>
    <name type="synonym">Ortyx montezumae</name>
    <dbReference type="NCBI Taxonomy" id="9017"/>
    <lineage>
        <taxon>Eukaryota</taxon>
        <taxon>Metazoa</taxon>
        <taxon>Chordata</taxon>
        <taxon>Craniata</taxon>
        <taxon>Vertebrata</taxon>
        <taxon>Euteleostomi</taxon>
        <taxon>Archelosauria</taxon>
        <taxon>Archosauria</taxon>
        <taxon>Dinosauria</taxon>
        <taxon>Saurischia</taxon>
        <taxon>Theropoda</taxon>
        <taxon>Coelurosauria</taxon>
        <taxon>Aves</taxon>
        <taxon>Neognathae</taxon>
        <taxon>Galloanserae</taxon>
        <taxon>Galliformes</taxon>
        <taxon>Odontophoridae</taxon>
        <taxon>Cyrtonyx</taxon>
    </lineage>
</organism>
<evidence type="ECO:0000250" key="1"/>
<evidence type="ECO:0000250" key="2">
    <source>
        <dbReference type="UniProtKB" id="P00157"/>
    </source>
</evidence>
<evidence type="ECO:0000255" key="3">
    <source>
        <dbReference type="PROSITE-ProRule" id="PRU00967"/>
    </source>
</evidence>
<evidence type="ECO:0000255" key="4">
    <source>
        <dbReference type="PROSITE-ProRule" id="PRU00968"/>
    </source>
</evidence>
<keyword id="KW-0249">Electron transport</keyword>
<keyword id="KW-0349">Heme</keyword>
<keyword id="KW-0408">Iron</keyword>
<keyword id="KW-0472">Membrane</keyword>
<keyword id="KW-0479">Metal-binding</keyword>
<keyword id="KW-0496">Mitochondrion</keyword>
<keyword id="KW-0999">Mitochondrion inner membrane</keyword>
<keyword id="KW-0679">Respiratory chain</keyword>
<keyword id="KW-0812">Transmembrane</keyword>
<keyword id="KW-1133">Transmembrane helix</keyword>
<keyword id="KW-0813">Transport</keyword>
<keyword id="KW-0830">Ubiquinone</keyword>
<gene>
    <name type="primary">MT-CYB</name>
    <name type="synonym">COB</name>
    <name type="synonym">CYTB</name>
    <name type="synonym">MTCYB</name>
</gene>
<proteinExistence type="inferred from homology"/>
<sequence>MAPNIRKSHPLMKIINNSLIDLPTPSNISAWWNFGSLLAVCLATQIITGLLLAAHYTADTTLAFSSVAHTCRNVQYGWLIRNLHANGASFFFICIYLHIGRGIYYGSYLYKETWNTGVILLLTLMATAFVGYVLPWGQMSFWGATVITNLFSAVPYIGQTLVEWAWGGFSVDNPTLTRFFALHFLLPFIIAGITIIHLAFLHESGSNNPLGISSNSDKIPFHPYYSLKDILGLALMITPLLTLALFSPNLLGDPENFTPANPLTTPPHIKPEWYFLFAYAILRSIPNKLGGVLALAASVFILFLIPLLHKSKQRTMTFRPLSQLLFWLLAANLFILTWIGSQPVEHPFIIIGQLASLSYFTTLLILFPIVGTLENKMLKL</sequence>
<reference key="1">
    <citation type="journal article" date="1999" name="Mol. Phylogenet. Evol.">
        <title>A molecular phylogeny of the pheasants and partridges suggests that these lineages are not monophyletic.</title>
        <authorList>
            <person name="Kimball R.T."/>
            <person name="Braun E.L."/>
            <person name="Zwartjes P.W."/>
            <person name="Crowe T.M."/>
            <person name="Ligon J.D."/>
        </authorList>
    </citation>
    <scope>NUCLEOTIDE SEQUENCE [GENOMIC DNA]</scope>
</reference>
<reference key="2">
    <citation type="submission" date="1997-10" db="EMBL/GenBank/DDBJ databases">
        <title>Molecular systematics of the scaled quail complex (Genus Callipepla).</title>
        <authorList>
            <person name="Zink R.M."/>
        </authorList>
    </citation>
    <scope>NUCLEOTIDE SEQUENCE [GENOMIC DNA] OF 270-370</scope>
    <source>
        <strain>Isolate 42090</strain>
    </source>
</reference>
<accession>O99655</accession>
<name>CYB_CYRMO</name>
<dbReference type="EMBL" id="AF068192">
    <property type="protein sequence ID" value="AAC70930.1"/>
    <property type="molecule type" value="Genomic_DNA"/>
</dbReference>
<dbReference type="EMBL" id="AF028778">
    <property type="protein sequence ID" value="AAD15658.1"/>
    <property type="molecule type" value="Genomic_DNA"/>
</dbReference>
<dbReference type="SMR" id="O99655"/>
<dbReference type="GO" id="GO:0005743">
    <property type="term" value="C:mitochondrial inner membrane"/>
    <property type="evidence" value="ECO:0007669"/>
    <property type="project" value="UniProtKB-SubCell"/>
</dbReference>
<dbReference type="GO" id="GO:0045275">
    <property type="term" value="C:respiratory chain complex III"/>
    <property type="evidence" value="ECO:0007669"/>
    <property type="project" value="InterPro"/>
</dbReference>
<dbReference type="GO" id="GO:0046872">
    <property type="term" value="F:metal ion binding"/>
    <property type="evidence" value="ECO:0007669"/>
    <property type="project" value="UniProtKB-KW"/>
</dbReference>
<dbReference type="GO" id="GO:0008121">
    <property type="term" value="F:ubiquinol-cytochrome-c reductase activity"/>
    <property type="evidence" value="ECO:0007669"/>
    <property type="project" value="InterPro"/>
</dbReference>
<dbReference type="GO" id="GO:0006122">
    <property type="term" value="P:mitochondrial electron transport, ubiquinol to cytochrome c"/>
    <property type="evidence" value="ECO:0007669"/>
    <property type="project" value="TreeGrafter"/>
</dbReference>
<dbReference type="CDD" id="cd00290">
    <property type="entry name" value="cytochrome_b_C"/>
    <property type="match status" value="1"/>
</dbReference>
<dbReference type="CDD" id="cd00284">
    <property type="entry name" value="Cytochrome_b_N"/>
    <property type="match status" value="1"/>
</dbReference>
<dbReference type="FunFam" id="1.20.810.10:FF:000002">
    <property type="entry name" value="Cytochrome b"/>
    <property type="match status" value="1"/>
</dbReference>
<dbReference type="Gene3D" id="1.20.810.10">
    <property type="entry name" value="Cytochrome Bc1 Complex, Chain C"/>
    <property type="match status" value="1"/>
</dbReference>
<dbReference type="InterPro" id="IPR005798">
    <property type="entry name" value="Cyt_b/b6_C"/>
</dbReference>
<dbReference type="InterPro" id="IPR036150">
    <property type="entry name" value="Cyt_b/b6_C_sf"/>
</dbReference>
<dbReference type="InterPro" id="IPR005797">
    <property type="entry name" value="Cyt_b/b6_N"/>
</dbReference>
<dbReference type="InterPro" id="IPR027387">
    <property type="entry name" value="Cytb/b6-like_sf"/>
</dbReference>
<dbReference type="InterPro" id="IPR030689">
    <property type="entry name" value="Cytochrome_b"/>
</dbReference>
<dbReference type="InterPro" id="IPR048260">
    <property type="entry name" value="Cytochrome_b_C_euk/bac"/>
</dbReference>
<dbReference type="InterPro" id="IPR048259">
    <property type="entry name" value="Cytochrome_b_N_euk/bac"/>
</dbReference>
<dbReference type="InterPro" id="IPR016174">
    <property type="entry name" value="Di-haem_cyt_TM"/>
</dbReference>
<dbReference type="PANTHER" id="PTHR19271">
    <property type="entry name" value="CYTOCHROME B"/>
    <property type="match status" value="1"/>
</dbReference>
<dbReference type="PANTHER" id="PTHR19271:SF16">
    <property type="entry name" value="CYTOCHROME B"/>
    <property type="match status" value="1"/>
</dbReference>
<dbReference type="Pfam" id="PF00032">
    <property type="entry name" value="Cytochrom_B_C"/>
    <property type="match status" value="1"/>
</dbReference>
<dbReference type="Pfam" id="PF00033">
    <property type="entry name" value="Cytochrome_B"/>
    <property type="match status" value="1"/>
</dbReference>
<dbReference type="PIRSF" id="PIRSF038885">
    <property type="entry name" value="COB"/>
    <property type="match status" value="1"/>
</dbReference>
<dbReference type="SUPFAM" id="SSF81648">
    <property type="entry name" value="a domain/subunit of cytochrome bc1 complex (Ubiquinol-cytochrome c reductase)"/>
    <property type="match status" value="1"/>
</dbReference>
<dbReference type="SUPFAM" id="SSF81342">
    <property type="entry name" value="Transmembrane di-heme cytochromes"/>
    <property type="match status" value="1"/>
</dbReference>
<dbReference type="PROSITE" id="PS51003">
    <property type="entry name" value="CYTB_CTER"/>
    <property type="match status" value="1"/>
</dbReference>
<dbReference type="PROSITE" id="PS51002">
    <property type="entry name" value="CYTB_NTER"/>
    <property type="match status" value="1"/>
</dbReference>
<comment type="function">
    <text evidence="2">Component of the ubiquinol-cytochrome c reductase complex (complex III or cytochrome b-c1 complex) that is part of the mitochondrial respiratory chain. The b-c1 complex mediates electron transfer from ubiquinol to cytochrome c. Contributes to the generation of a proton gradient across the mitochondrial membrane that is then used for ATP synthesis.</text>
</comment>
<comment type="cofactor">
    <cofactor evidence="2">
        <name>heme b</name>
        <dbReference type="ChEBI" id="CHEBI:60344"/>
    </cofactor>
    <text evidence="2">Binds 2 heme b groups non-covalently.</text>
</comment>
<comment type="subunit">
    <text evidence="2">The cytochrome bc1 complex contains 11 subunits: 3 respiratory subunits (MT-CYB, CYC1 and UQCRFS1), 2 core proteins (UQCRC1 and UQCRC2) and 6 low-molecular weight proteins (UQCRH/QCR6, UQCRB/QCR7, UQCRQ/QCR8, UQCR10/QCR9, UQCR11/QCR10 and a cleavage product of UQCRFS1). This cytochrome bc1 complex then forms a dimer.</text>
</comment>
<comment type="subcellular location">
    <subcellularLocation>
        <location evidence="2">Mitochondrion inner membrane</location>
        <topology evidence="2">Multi-pass membrane protein</topology>
    </subcellularLocation>
</comment>
<comment type="miscellaneous">
    <text evidence="1">Heme 1 (or BL or b562) is low-potential and absorbs at about 562 nm, and heme 2 (or BH or b566) is high-potential and absorbs at about 566 nm.</text>
</comment>
<comment type="similarity">
    <text evidence="3 4">Belongs to the cytochrome b family.</text>
</comment>
<comment type="caution">
    <text evidence="2">The full-length protein contains only eight transmembrane helices, not nine as predicted by bioinformatics tools.</text>
</comment>
<geneLocation type="mitochondrion"/>
<protein>
    <recommendedName>
        <fullName>Cytochrome b</fullName>
    </recommendedName>
    <alternativeName>
        <fullName>Complex III subunit 3</fullName>
    </alternativeName>
    <alternativeName>
        <fullName>Complex III subunit III</fullName>
    </alternativeName>
    <alternativeName>
        <fullName>Cytochrome b-c1 complex subunit 3</fullName>
    </alternativeName>
    <alternativeName>
        <fullName>Ubiquinol-cytochrome-c reductase complex cytochrome b subunit</fullName>
    </alternativeName>
</protein>
<feature type="chain" id="PRO_0000060853" description="Cytochrome b">
    <location>
        <begin position="1"/>
        <end position="380"/>
    </location>
</feature>
<feature type="transmembrane region" description="Helical" evidence="2">
    <location>
        <begin position="34"/>
        <end position="54"/>
    </location>
</feature>
<feature type="transmembrane region" description="Helical" evidence="2">
    <location>
        <begin position="78"/>
        <end position="99"/>
    </location>
</feature>
<feature type="transmembrane region" description="Helical" evidence="2">
    <location>
        <begin position="114"/>
        <end position="134"/>
    </location>
</feature>
<feature type="transmembrane region" description="Helical" evidence="2">
    <location>
        <begin position="179"/>
        <end position="199"/>
    </location>
</feature>
<feature type="transmembrane region" description="Helical" evidence="2">
    <location>
        <begin position="227"/>
        <end position="247"/>
    </location>
</feature>
<feature type="transmembrane region" description="Helical" evidence="2">
    <location>
        <begin position="289"/>
        <end position="309"/>
    </location>
</feature>
<feature type="transmembrane region" description="Helical" evidence="2">
    <location>
        <begin position="321"/>
        <end position="341"/>
    </location>
</feature>
<feature type="transmembrane region" description="Helical" evidence="2">
    <location>
        <begin position="348"/>
        <end position="368"/>
    </location>
</feature>
<feature type="binding site" description="axial binding residue" evidence="2">
    <location>
        <position position="84"/>
    </location>
    <ligand>
        <name>heme b</name>
        <dbReference type="ChEBI" id="CHEBI:60344"/>
        <label>b562</label>
    </ligand>
    <ligandPart>
        <name>Fe</name>
        <dbReference type="ChEBI" id="CHEBI:18248"/>
    </ligandPart>
</feature>
<feature type="binding site" description="axial binding residue" evidence="2">
    <location>
        <position position="98"/>
    </location>
    <ligand>
        <name>heme b</name>
        <dbReference type="ChEBI" id="CHEBI:60344"/>
        <label>b566</label>
    </ligand>
    <ligandPart>
        <name>Fe</name>
        <dbReference type="ChEBI" id="CHEBI:18248"/>
    </ligandPart>
</feature>
<feature type="binding site" description="axial binding residue" evidence="2">
    <location>
        <position position="183"/>
    </location>
    <ligand>
        <name>heme b</name>
        <dbReference type="ChEBI" id="CHEBI:60344"/>
        <label>b562</label>
    </ligand>
    <ligandPart>
        <name>Fe</name>
        <dbReference type="ChEBI" id="CHEBI:18248"/>
    </ligandPart>
</feature>
<feature type="binding site" description="axial binding residue" evidence="2">
    <location>
        <position position="197"/>
    </location>
    <ligand>
        <name>heme b</name>
        <dbReference type="ChEBI" id="CHEBI:60344"/>
        <label>b566</label>
    </ligand>
    <ligandPart>
        <name>Fe</name>
        <dbReference type="ChEBI" id="CHEBI:18248"/>
    </ligandPart>
</feature>
<feature type="binding site" evidence="2">
    <location>
        <position position="202"/>
    </location>
    <ligand>
        <name>a ubiquinone</name>
        <dbReference type="ChEBI" id="CHEBI:16389"/>
    </ligand>
</feature>